<name>AUR31_RANAE</name>
<protein>
    <recommendedName>
        <fullName evidence="5">Aurein-3.1</fullName>
    </recommendedName>
    <component>
        <recommendedName>
            <fullName evidence="5">Aurein-3.1.1</fullName>
        </recommendedName>
    </component>
    <component>
        <recommendedName>
            <fullName evidence="5">Aurein-3.1.2</fullName>
        </recommendedName>
    </component>
</protein>
<keyword id="KW-0027">Amidation</keyword>
<keyword id="KW-0878">Amphibian defense peptide</keyword>
<keyword id="KW-0044">Antibiotic</keyword>
<keyword id="KW-0929">Antimicrobial</keyword>
<keyword id="KW-0165">Cleavage on pair of basic residues</keyword>
<keyword id="KW-0903">Direct protein sequencing</keyword>
<keyword id="KW-0391">Immunity</keyword>
<keyword id="KW-0399">Innate immunity</keyword>
<keyword id="KW-0472">Membrane</keyword>
<keyword id="KW-0964">Secreted</keyword>
<keyword id="KW-0732">Signal</keyword>
<keyword id="KW-1052">Target cell membrane</keyword>
<keyword id="KW-1053">Target membrane</keyword>
<comment type="function">
    <text evidence="3">Amphipathic alpha-helical antimicrobial peptide with weak to potent activity against Gram-positive bacteria, and no activity against Gram-negative bacteria (PubMed:10951191). Probably acts by disturbing membrane functions with its amphipathic structure (PubMed:10951191). Shows anticancer activity (PubMed:10951191).</text>
</comment>
<comment type="subcellular location">
    <subcellularLocation>
        <location evidence="3 4">Secreted</location>
    </subcellularLocation>
    <subcellularLocation>
        <location evidence="6">Target cell membrane</location>
    </subcellularLocation>
</comment>
<comment type="tissue specificity">
    <text evidence="7 8">Expressed by the skin dorsal glands.</text>
</comment>
<comment type="mass spectrometry"/>
<comment type="similarity">
    <text evidence="6">Belongs to the frog skin active peptide (FSAP) family. Aurein subfamily.</text>
</comment>
<comment type="online information" name="The antimicrobial peptide database">
    <link uri="https://wangapd3.com/database/query_output.php?ID=00020"/>
</comment>
<feature type="signal peptide" evidence="1">
    <location>
        <begin position="1"/>
        <end position="22"/>
    </location>
</feature>
<feature type="propeptide" id="PRO_0000450293" evidence="7">
    <location>
        <begin position="23"/>
        <end position="49"/>
    </location>
</feature>
<feature type="peptide" id="PRO_0000010154" description="Aurein-3.1" evidence="3">
    <location>
        <begin position="50"/>
        <end position="66"/>
    </location>
</feature>
<feature type="peptide" id="PRO_0000010155" description="Aurein-3.1.1" evidence="3">
    <location>
        <begin position="50"/>
        <end position="63"/>
    </location>
</feature>
<feature type="peptide" id="PRO_0000010156" description="Aurein-3.1.2" evidence="3">
    <location>
        <begin position="52"/>
        <end position="66"/>
    </location>
</feature>
<feature type="region of interest" description="Disordered" evidence="2">
    <location>
        <begin position="27"/>
        <end position="48"/>
    </location>
</feature>
<feature type="compositionally biased region" description="Basic and acidic residues" evidence="2">
    <location>
        <begin position="38"/>
        <end position="48"/>
    </location>
</feature>
<feature type="modified residue" description="Isoleucine amide" evidence="3">
    <location>
        <position position="66"/>
    </location>
</feature>
<evidence type="ECO:0000255" key="1"/>
<evidence type="ECO:0000256" key="2">
    <source>
        <dbReference type="SAM" id="MobiDB-lite"/>
    </source>
</evidence>
<evidence type="ECO:0000269" key="3">
    <source>
    </source>
</evidence>
<evidence type="ECO:0000269" key="4">
    <source>
    </source>
</evidence>
<evidence type="ECO:0000303" key="5">
    <source>
    </source>
</evidence>
<evidence type="ECO:0000305" key="6"/>
<evidence type="ECO:0000305" key="7">
    <source>
    </source>
</evidence>
<evidence type="ECO:0000305" key="8">
    <source>
    </source>
</evidence>
<sequence>MAFLKKSLFLVLFLGLVSLSICEKEKRQNEEDEDENEAANHEEGSEEKRGLFDIVKKIAGHIAGSIGKKR</sequence>
<reference key="1">
    <citation type="journal article" date="2005" name="Regul. Pept.">
        <title>The structural organization of aurein precursor cDNAs from the skin secretion of the Australian green and golden bell frog, Litoria aurea.</title>
        <authorList>
            <person name="Chen T."/>
            <person name="Xue Y."/>
            <person name="Zhou M."/>
            <person name="Shaw C."/>
        </authorList>
    </citation>
    <scope>NUCLEOTIDE SEQUENCE [MRNA]</scope>
    <scope>MASS SPECTROMETRY</scope>
    <scope>SUBCELLULAR LOCATION</scope>
    <source>
        <tissue>Skin</tissue>
    </source>
</reference>
<reference key="2">
    <citation type="journal article" date="2000" name="Eur. J. Biochem.">
        <title>The antibiotic and anticancer active aurein peptides from the australian bell frogs Litoria aurea and Litoria raniformis the solution structure of aurein 1.2.</title>
        <authorList>
            <person name="Rozek T."/>
            <person name="Wegener K.L."/>
            <person name="Bowie J.H."/>
            <person name="Olver I.N."/>
            <person name="Carver J.A."/>
            <person name="Wallace J.C."/>
            <person name="Tyler M.J."/>
        </authorList>
    </citation>
    <scope>PROTEIN SEQUENCE OF 50-66</scope>
    <scope>AMIDATION AT ILE-66</scope>
    <scope>FUNCTION</scope>
    <scope>SUBCELLULAR LOCATION</scope>
    <source>
        <tissue>Skin secretion</tissue>
    </source>
</reference>
<accession>P69021</accession>
<accession>P82394</accession>
<accession>Q5K0E3</accession>
<organism>
    <name type="scientific">Ranoidea aurea</name>
    <name type="common">Green and golden bell frog</name>
    <name type="synonym">Litoria aurea</name>
    <dbReference type="NCBI Taxonomy" id="8371"/>
    <lineage>
        <taxon>Eukaryota</taxon>
        <taxon>Metazoa</taxon>
        <taxon>Chordata</taxon>
        <taxon>Craniata</taxon>
        <taxon>Vertebrata</taxon>
        <taxon>Euteleostomi</taxon>
        <taxon>Amphibia</taxon>
        <taxon>Batrachia</taxon>
        <taxon>Anura</taxon>
        <taxon>Neobatrachia</taxon>
        <taxon>Hyloidea</taxon>
        <taxon>Hylidae</taxon>
        <taxon>Pelodryadinae</taxon>
        <taxon>Ranoidea</taxon>
    </lineage>
</organism>
<dbReference type="EMBL" id="AJ850130">
    <property type="protein sequence ID" value="CAH61714.1"/>
    <property type="molecule type" value="mRNA"/>
</dbReference>
<dbReference type="GO" id="GO:0005576">
    <property type="term" value="C:extracellular region"/>
    <property type="evidence" value="ECO:0007669"/>
    <property type="project" value="UniProtKB-SubCell"/>
</dbReference>
<dbReference type="GO" id="GO:0016020">
    <property type="term" value="C:membrane"/>
    <property type="evidence" value="ECO:0007669"/>
    <property type="project" value="UniProtKB-KW"/>
</dbReference>
<dbReference type="GO" id="GO:0044218">
    <property type="term" value="C:other organism cell membrane"/>
    <property type="evidence" value="ECO:0007669"/>
    <property type="project" value="UniProtKB-KW"/>
</dbReference>
<dbReference type="GO" id="GO:0042742">
    <property type="term" value="P:defense response to bacterium"/>
    <property type="evidence" value="ECO:0007669"/>
    <property type="project" value="UniProtKB-KW"/>
</dbReference>
<dbReference type="GO" id="GO:0045087">
    <property type="term" value="P:innate immune response"/>
    <property type="evidence" value="ECO:0007669"/>
    <property type="project" value="UniProtKB-KW"/>
</dbReference>
<dbReference type="InterPro" id="IPR013157">
    <property type="entry name" value="Aurein_antimicrobial_peptide"/>
</dbReference>
<dbReference type="InterPro" id="IPR004275">
    <property type="entry name" value="Frog_antimicrobial_propeptide"/>
</dbReference>
<dbReference type="InterPro" id="IPR016322">
    <property type="entry name" value="FSAP"/>
</dbReference>
<dbReference type="Pfam" id="PF08256">
    <property type="entry name" value="Antimicrobial20"/>
    <property type="match status" value="1"/>
</dbReference>
<dbReference type="Pfam" id="PF03032">
    <property type="entry name" value="FSAP_sig_propep"/>
    <property type="match status" value="1"/>
</dbReference>
<dbReference type="PIRSF" id="PIRSF001822">
    <property type="entry name" value="Dermaseptin_precursor"/>
    <property type="match status" value="1"/>
</dbReference>
<proteinExistence type="evidence at protein level"/>